<sequence>MEMPIIKLKNFDGPFDLLLHLIKKNEMSITEIKIHEITKQYLEYIALMKELDLEITSEFIVMAATLIEIKSKSLLPKVKVEDETCEEDLQKILMEKLQEYKKFKKISAYLRERELSTGEVFTKKAEIIEVEADNKLDDDYFKNITMLDLYKLYNNLMRIYGEKQNVNVMEKKISVDKYKITDKINFLRDKLSEKSVVRFSEFIPQCECKLEVVVTFMAMLELIKRSEIKVIQYENFGEIMMEKVIVNE</sequence>
<reference key="1">
    <citation type="journal article" date="2006" name="Genome Res.">
        <title>Skewed genomic variability in strains of the toxigenic bacterial pathogen, Clostridium perfringens.</title>
        <authorList>
            <person name="Myers G.S.A."/>
            <person name="Rasko D.A."/>
            <person name="Cheung J.K."/>
            <person name="Ravel J."/>
            <person name="Seshadri R."/>
            <person name="DeBoy R.T."/>
            <person name="Ren Q."/>
            <person name="Varga J."/>
            <person name="Awad M.M."/>
            <person name="Brinkac L.M."/>
            <person name="Daugherty S.C."/>
            <person name="Haft D.H."/>
            <person name="Dodson R.J."/>
            <person name="Madupu R."/>
            <person name="Nelson W.C."/>
            <person name="Rosovitz M.J."/>
            <person name="Sullivan S.A."/>
            <person name="Khouri H."/>
            <person name="Dimitrov G.I."/>
            <person name="Watkins K.L."/>
            <person name="Mulligan S."/>
            <person name="Benton J."/>
            <person name="Radune D."/>
            <person name="Fisher D.J."/>
            <person name="Atkins H.S."/>
            <person name="Hiscox T."/>
            <person name="Jost B.H."/>
            <person name="Billington S.J."/>
            <person name="Songer J.G."/>
            <person name="McClane B.A."/>
            <person name="Titball R.W."/>
            <person name="Rood J.I."/>
            <person name="Melville S.B."/>
            <person name="Paulsen I.T."/>
        </authorList>
    </citation>
    <scope>NUCLEOTIDE SEQUENCE [LARGE SCALE GENOMIC DNA]</scope>
    <source>
        <strain>SM101 / Type A</strain>
    </source>
</reference>
<accession>Q0SS18</accession>
<gene>
    <name evidence="1" type="primary">scpA</name>
    <name type="ordered locus">CPR_1774</name>
</gene>
<name>SCPA_CLOPS</name>
<keyword id="KW-0131">Cell cycle</keyword>
<keyword id="KW-0132">Cell division</keyword>
<keyword id="KW-0159">Chromosome partition</keyword>
<keyword id="KW-0963">Cytoplasm</keyword>
<feature type="chain" id="PRO_1000069970" description="Segregation and condensation protein A">
    <location>
        <begin position="1"/>
        <end position="248"/>
    </location>
</feature>
<evidence type="ECO:0000255" key="1">
    <source>
        <dbReference type="HAMAP-Rule" id="MF_01805"/>
    </source>
</evidence>
<proteinExistence type="inferred from homology"/>
<comment type="function">
    <text evidence="1">Participates in chromosomal partition during cell division. May act via the formation of a condensin-like complex containing Smc and ScpB that pull DNA away from mid-cell into both cell halves.</text>
</comment>
<comment type="subunit">
    <text evidence="1">Component of a cohesin-like complex composed of ScpA, ScpB and the Smc homodimer, in which ScpA and ScpB bind to the head domain of Smc. The presence of the three proteins is required for the association of the complex with DNA.</text>
</comment>
<comment type="subcellular location">
    <subcellularLocation>
        <location evidence="1">Cytoplasm</location>
    </subcellularLocation>
    <text evidence="1">Associated with two foci at the outer edges of the nucleoid region in young cells, and at four foci within both cell halves in older cells.</text>
</comment>
<comment type="similarity">
    <text evidence="1">Belongs to the ScpA family.</text>
</comment>
<protein>
    <recommendedName>
        <fullName evidence="1">Segregation and condensation protein A</fullName>
    </recommendedName>
</protein>
<dbReference type="EMBL" id="CP000312">
    <property type="protein sequence ID" value="ABG85548.1"/>
    <property type="molecule type" value="Genomic_DNA"/>
</dbReference>
<dbReference type="RefSeq" id="WP_011592677.1">
    <property type="nucleotide sequence ID" value="NC_008262.1"/>
</dbReference>
<dbReference type="SMR" id="Q0SS18"/>
<dbReference type="KEGG" id="cpr:CPR_1774"/>
<dbReference type="Proteomes" id="UP000001824">
    <property type="component" value="Chromosome"/>
</dbReference>
<dbReference type="GO" id="GO:0005737">
    <property type="term" value="C:cytoplasm"/>
    <property type="evidence" value="ECO:0007669"/>
    <property type="project" value="UniProtKB-SubCell"/>
</dbReference>
<dbReference type="GO" id="GO:0051301">
    <property type="term" value="P:cell division"/>
    <property type="evidence" value="ECO:0007669"/>
    <property type="project" value="UniProtKB-KW"/>
</dbReference>
<dbReference type="GO" id="GO:0007059">
    <property type="term" value="P:chromosome segregation"/>
    <property type="evidence" value="ECO:0007669"/>
    <property type="project" value="UniProtKB-UniRule"/>
</dbReference>
<dbReference type="GO" id="GO:0006260">
    <property type="term" value="P:DNA replication"/>
    <property type="evidence" value="ECO:0007669"/>
    <property type="project" value="UniProtKB-UniRule"/>
</dbReference>
<dbReference type="Gene3D" id="6.10.250.2410">
    <property type="match status" value="1"/>
</dbReference>
<dbReference type="Gene3D" id="1.10.10.580">
    <property type="entry name" value="Structural maintenance of chromosome 1. Chain E"/>
    <property type="match status" value="1"/>
</dbReference>
<dbReference type="HAMAP" id="MF_01805">
    <property type="entry name" value="ScpA"/>
    <property type="match status" value="1"/>
</dbReference>
<dbReference type="InterPro" id="IPR003768">
    <property type="entry name" value="ScpA"/>
</dbReference>
<dbReference type="InterPro" id="IPR023093">
    <property type="entry name" value="ScpA-like_C"/>
</dbReference>
<dbReference type="NCBIfam" id="NF000994">
    <property type="entry name" value="PRK00104.1-3"/>
    <property type="match status" value="1"/>
</dbReference>
<dbReference type="PANTHER" id="PTHR33969">
    <property type="entry name" value="SEGREGATION AND CONDENSATION PROTEIN A"/>
    <property type="match status" value="1"/>
</dbReference>
<dbReference type="PANTHER" id="PTHR33969:SF2">
    <property type="entry name" value="SEGREGATION AND CONDENSATION PROTEIN A"/>
    <property type="match status" value="1"/>
</dbReference>
<dbReference type="Pfam" id="PF02616">
    <property type="entry name" value="SMC_ScpA"/>
    <property type="match status" value="1"/>
</dbReference>
<organism>
    <name type="scientific">Clostridium perfringens (strain SM101 / Type A)</name>
    <dbReference type="NCBI Taxonomy" id="289380"/>
    <lineage>
        <taxon>Bacteria</taxon>
        <taxon>Bacillati</taxon>
        <taxon>Bacillota</taxon>
        <taxon>Clostridia</taxon>
        <taxon>Eubacteriales</taxon>
        <taxon>Clostridiaceae</taxon>
        <taxon>Clostridium</taxon>
    </lineage>
</organism>